<proteinExistence type="evidence at transcript level"/>
<accession>Q9M0V4</accession>
<dbReference type="EMBL" id="AL161503">
    <property type="protein sequence ID" value="CAB81083.1"/>
    <property type="molecule type" value="Genomic_DNA"/>
</dbReference>
<dbReference type="EMBL" id="CP002687">
    <property type="protein sequence ID" value="AEE82516.1"/>
    <property type="molecule type" value="Genomic_DNA"/>
</dbReference>
<dbReference type="EMBL" id="AY099817">
    <property type="protein sequence ID" value="AAM20668.1"/>
    <property type="molecule type" value="mRNA"/>
</dbReference>
<dbReference type="EMBL" id="BT000325">
    <property type="protein sequence ID" value="AAN15644.1"/>
    <property type="molecule type" value="mRNA"/>
</dbReference>
<dbReference type="PIR" id="A85068">
    <property type="entry name" value="A85068"/>
</dbReference>
<dbReference type="RefSeq" id="NP_192450.1">
    <property type="nucleotide sequence ID" value="NM_116780.3"/>
</dbReference>
<dbReference type="SMR" id="Q9M0V4"/>
<dbReference type="FunCoup" id="Q9M0V4">
    <property type="interactions" value="3526"/>
</dbReference>
<dbReference type="STRING" id="3702.Q9M0V4"/>
<dbReference type="iPTMnet" id="Q9M0V4"/>
<dbReference type="PaxDb" id="3702-AT4G05410.1"/>
<dbReference type="ProteomicsDB" id="228663"/>
<dbReference type="EnsemblPlants" id="AT4G05410.1">
    <property type="protein sequence ID" value="AT4G05410.1"/>
    <property type="gene ID" value="AT4G05410"/>
</dbReference>
<dbReference type="GeneID" id="825889"/>
<dbReference type="Gramene" id="AT4G05410.1">
    <property type="protein sequence ID" value="AT4G05410.1"/>
    <property type="gene ID" value="AT4G05410"/>
</dbReference>
<dbReference type="KEGG" id="ath:AT4G05410"/>
<dbReference type="Araport" id="AT4G05410"/>
<dbReference type="TAIR" id="AT4G05410">
    <property type="gene designation" value="YAO"/>
</dbReference>
<dbReference type="eggNOG" id="KOG0299">
    <property type="taxonomic scope" value="Eukaryota"/>
</dbReference>
<dbReference type="HOGENOM" id="CLU_014017_1_1_1"/>
<dbReference type="InParanoid" id="Q9M0V4"/>
<dbReference type="OMA" id="MPEQARM"/>
<dbReference type="OrthoDB" id="189968at2759"/>
<dbReference type="PhylomeDB" id="Q9M0V4"/>
<dbReference type="CD-CODE" id="4299E36E">
    <property type="entry name" value="Nucleolus"/>
</dbReference>
<dbReference type="PRO" id="PR:Q9M0V4"/>
<dbReference type="Proteomes" id="UP000006548">
    <property type="component" value="Chromosome 4"/>
</dbReference>
<dbReference type="ExpressionAtlas" id="Q9M0V4">
    <property type="expression patterns" value="baseline and differential"/>
</dbReference>
<dbReference type="GO" id="GO:0080008">
    <property type="term" value="C:Cul4-RING E3 ubiquitin ligase complex"/>
    <property type="evidence" value="ECO:0000250"/>
    <property type="project" value="TAIR"/>
</dbReference>
<dbReference type="GO" id="GO:0005730">
    <property type="term" value="C:nucleolus"/>
    <property type="evidence" value="ECO:0000314"/>
    <property type="project" value="TAIR"/>
</dbReference>
<dbReference type="GO" id="GO:1990904">
    <property type="term" value="C:ribonucleoprotein complex"/>
    <property type="evidence" value="ECO:0007669"/>
    <property type="project" value="UniProtKB-KW"/>
</dbReference>
<dbReference type="GO" id="GO:0034511">
    <property type="term" value="F:U3 snoRNA binding"/>
    <property type="evidence" value="ECO:0007669"/>
    <property type="project" value="InterPro"/>
</dbReference>
<dbReference type="GO" id="GO:0060321">
    <property type="term" value="P:acceptance of pollen"/>
    <property type="evidence" value="ECO:0000315"/>
    <property type="project" value="TAIR"/>
</dbReference>
<dbReference type="GO" id="GO:0009793">
    <property type="term" value="P:embryo development ending in seed dormancy"/>
    <property type="evidence" value="ECO:0000315"/>
    <property type="project" value="TAIR"/>
</dbReference>
<dbReference type="GO" id="GO:0009553">
    <property type="term" value="P:embryo sac development"/>
    <property type="evidence" value="ECO:0000315"/>
    <property type="project" value="TAIR"/>
</dbReference>
<dbReference type="GO" id="GO:0006364">
    <property type="term" value="P:rRNA processing"/>
    <property type="evidence" value="ECO:0007669"/>
    <property type="project" value="UniProtKB-KW"/>
</dbReference>
<dbReference type="FunFam" id="2.130.10.10:FF:000483">
    <property type="entry name" value="U3 snoRNP-associated protein-like EMB2271"/>
    <property type="match status" value="1"/>
</dbReference>
<dbReference type="Gene3D" id="2.130.10.10">
    <property type="entry name" value="YVTN repeat-like/Quinoprotein amine dehydrogenase"/>
    <property type="match status" value="1"/>
</dbReference>
<dbReference type="InterPro" id="IPR020472">
    <property type="entry name" value="G-protein_beta_WD-40_rep"/>
</dbReference>
<dbReference type="InterPro" id="IPR039241">
    <property type="entry name" value="Rrp9-like"/>
</dbReference>
<dbReference type="InterPro" id="IPR015943">
    <property type="entry name" value="WD40/YVTN_repeat-like_dom_sf"/>
</dbReference>
<dbReference type="InterPro" id="IPR019775">
    <property type="entry name" value="WD40_repeat_CS"/>
</dbReference>
<dbReference type="InterPro" id="IPR036322">
    <property type="entry name" value="WD40_repeat_dom_sf"/>
</dbReference>
<dbReference type="InterPro" id="IPR001680">
    <property type="entry name" value="WD40_rpt"/>
</dbReference>
<dbReference type="PANTHER" id="PTHR19865">
    <property type="entry name" value="U3 SMALL NUCLEOLAR RNA INTERACTING PROTEIN 2"/>
    <property type="match status" value="1"/>
</dbReference>
<dbReference type="PANTHER" id="PTHR19865:SF0">
    <property type="entry name" value="U3 SMALL NUCLEOLAR RNA-INTERACTING PROTEIN 2"/>
    <property type="match status" value="1"/>
</dbReference>
<dbReference type="Pfam" id="PF00400">
    <property type="entry name" value="WD40"/>
    <property type="match status" value="5"/>
</dbReference>
<dbReference type="PRINTS" id="PR00320">
    <property type="entry name" value="GPROTEINBRPT"/>
</dbReference>
<dbReference type="SMART" id="SM00320">
    <property type="entry name" value="WD40"/>
    <property type="match status" value="6"/>
</dbReference>
<dbReference type="SUPFAM" id="SSF50978">
    <property type="entry name" value="WD40 repeat-like"/>
    <property type="match status" value="1"/>
</dbReference>
<dbReference type="PROSITE" id="PS00678">
    <property type="entry name" value="WD_REPEATS_1"/>
    <property type="match status" value="2"/>
</dbReference>
<dbReference type="PROSITE" id="PS50082">
    <property type="entry name" value="WD_REPEATS_2"/>
    <property type="match status" value="3"/>
</dbReference>
<dbReference type="PROSITE" id="PS50294">
    <property type="entry name" value="WD_REPEATS_REGION"/>
    <property type="match status" value="1"/>
</dbReference>
<evidence type="ECO:0000250" key="1">
    <source>
        <dbReference type="UniProtKB" id="O43818"/>
    </source>
</evidence>
<evidence type="ECO:0000255" key="2"/>
<evidence type="ECO:0000256" key="3">
    <source>
        <dbReference type="SAM" id="MobiDB-lite"/>
    </source>
</evidence>
<evidence type="ECO:0000269" key="4">
    <source>
    </source>
</evidence>
<evidence type="ECO:0000303" key="5">
    <source>
    </source>
</evidence>
<evidence type="ECO:0000305" key="6"/>
<evidence type="ECO:0000312" key="7">
    <source>
        <dbReference type="Araport" id="AT4G05410"/>
    </source>
</evidence>
<gene>
    <name evidence="5" type="primary">YAO</name>
    <name evidence="7" type="ordered locus">At4g05410</name>
</gene>
<comment type="function">
    <text evidence="1 4">Component of a nucleolar small nuclear ribonucleoprotein particle (snoRNP) thought to participate in the processing and modification of pre-ribosomal RNA (By similarity). Essential for embryogenesis. Plays a critical role in embryo sac development and gametic cell fate. Required for the correct positioning of the first division plane of zygote. May function during early embryogenesis (PubMed:20699009).</text>
</comment>
<comment type="subcellular location">
    <subcellularLocation>
        <location evidence="4">Nucleus</location>
        <location evidence="4">Nucleolus</location>
    </subcellularLocation>
</comment>
<comment type="tissue specificity">
    <text evidence="4">Expressed in tissues with active in cell division such as shoot apexes, root tips, lateral root primordia, embryos, endosperm, pollen grains and embryo sacs.</text>
</comment>
<comment type="developmental stage">
    <text evidence="4">Strongly expressed in early embryos and endosperm, but very weakly in globular embryos and further embryo developmental stages.</text>
</comment>
<comment type="disruption phenotype">
    <text evidence="4">Embryonic lethality when homozygous.</text>
</comment>
<comment type="similarity">
    <text evidence="6">Belongs to the WD repeat RRP9 family.</text>
</comment>
<sequence length="504" mass="56519">MKYNNEKKKGGSFKRGGKKGSNERDPFFEEEPKKRRKVSYDDDDIESVDSDAEENGFTGGDEDGRRVDGEVEDEDEFADETAGEKRKRLAEEMLNRRREAMRREREEADNDDDDDEDDDETIKKSLMQKQQEDSGRIRRLIASRVQEPLSTDGFSVIVKHRRSVVSVALSDDDSRGFSASKDGTIMHWDVSSGKTDKYIWPSDEILKSHGMKLREPRNKNHSRESLALAVSSDGRYLATGGVDRHVHIWDVRTREHVQAFPGHRNTVSCLCFRYGTSELYSGSFDRTVKVWNVEDKAFITENHGHQGEILAIDALRKERALTVGRDRTMLYHKVPESTRMIYRAPASSLESCCFISDNEYLSGSDNGTVALWGMLKKKPVFVFKNAHQDIPDGITTNGILENGDHEPVNNNCSANSWVNAVATSRGSDLAASGAGNGFVRLWAVETNAIRPLYELPLTGFVNSLAFAKSGKFLIAGVGQETRFGRWGCLKSAQNGVAIHPLRLA</sequence>
<protein>
    <recommendedName>
        <fullName evidence="6">U3 snoRNP-associated protein-like YAO</fullName>
    </recommendedName>
</protein>
<keyword id="KW-0539">Nucleus</keyword>
<keyword id="KW-1185">Reference proteome</keyword>
<keyword id="KW-0677">Repeat</keyword>
<keyword id="KW-0687">Ribonucleoprotein</keyword>
<keyword id="KW-0694">RNA-binding</keyword>
<keyword id="KW-0698">rRNA processing</keyword>
<keyword id="KW-0853">WD repeat</keyword>
<name>YAO_ARATH</name>
<reference key="1">
    <citation type="journal article" date="1999" name="Nature">
        <title>Sequence and analysis of chromosome 4 of the plant Arabidopsis thaliana.</title>
        <authorList>
            <person name="Mayer K.F.X."/>
            <person name="Schueller C."/>
            <person name="Wambutt R."/>
            <person name="Murphy G."/>
            <person name="Volckaert G."/>
            <person name="Pohl T."/>
            <person name="Duesterhoeft A."/>
            <person name="Stiekema W."/>
            <person name="Entian K.-D."/>
            <person name="Terryn N."/>
            <person name="Harris B."/>
            <person name="Ansorge W."/>
            <person name="Brandt P."/>
            <person name="Grivell L.A."/>
            <person name="Rieger M."/>
            <person name="Weichselgartner M."/>
            <person name="de Simone V."/>
            <person name="Obermaier B."/>
            <person name="Mache R."/>
            <person name="Mueller M."/>
            <person name="Kreis M."/>
            <person name="Delseny M."/>
            <person name="Puigdomenech P."/>
            <person name="Watson M."/>
            <person name="Schmidtheini T."/>
            <person name="Reichert B."/>
            <person name="Portetelle D."/>
            <person name="Perez-Alonso M."/>
            <person name="Boutry M."/>
            <person name="Bancroft I."/>
            <person name="Vos P."/>
            <person name="Hoheisel J."/>
            <person name="Zimmermann W."/>
            <person name="Wedler H."/>
            <person name="Ridley P."/>
            <person name="Langham S.-A."/>
            <person name="McCullagh B."/>
            <person name="Bilham L."/>
            <person name="Robben J."/>
            <person name="van der Schueren J."/>
            <person name="Grymonprez B."/>
            <person name="Chuang Y.-J."/>
            <person name="Vandenbussche F."/>
            <person name="Braeken M."/>
            <person name="Weltjens I."/>
            <person name="Voet M."/>
            <person name="Bastiaens I."/>
            <person name="Aert R."/>
            <person name="Defoor E."/>
            <person name="Weitzenegger T."/>
            <person name="Bothe G."/>
            <person name="Ramsperger U."/>
            <person name="Hilbert H."/>
            <person name="Braun M."/>
            <person name="Holzer E."/>
            <person name="Brandt A."/>
            <person name="Peters S."/>
            <person name="van Staveren M."/>
            <person name="Dirkse W."/>
            <person name="Mooijman P."/>
            <person name="Klein Lankhorst R."/>
            <person name="Rose M."/>
            <person name="Hauf J."/>
            <person name="Koetter P."/>
            <person name="Berneiser S."/>
            <person name="Hempel S."/>
            <person name="Feldpausch M."/>
            <person name="Lamberth S."/>
            <person name="Van den Daele H."/>
            <person name="De Keyser A."/>
            <person name="Buysshaert C."/>
            <person name="Gielen J."/>
            <person name="Villarroel R."/>
            <person name="De Clercq R."/>
            <person name="van Montagu M."/>
            <person name="Rogers J."/>
            <person name="Cronin A."/>
            <person name="Quail M.A."/>
            <person name="Bray-Allen S."/>
            <person name="Clark L."/>
            <person name="Doggett J."/>
            <person name="Hall S."/>
            <person name="Kay M."/>
            <person name="Lennard N."/>
            <person name="McLay K."/>
            <person name="Mayes R."/>
            <person name="Pettett A."/>
            <person name="Rajandream M.A."/>
            <person name="Lyne M."/>
            <person name="Benes V."/>
            <person name="Rechmann S."/>
            <person name="Borkova D."/>
            <person name="Bloecker H."/>
            <person name="Scharfe M."/>
            <person name="Grimm M."/>
            <person name="Loehnert T.-H."/>
            <person name="Dose S."/>
            <person name="de Haan M."/>
            <person name="Maarse A.C."/>
            <person name="Schaefer M."/>
            <person name="Mueller-Auer S."/>
            <person name="Gabel C."/>
            <person name="Fuchs M."/>
            <person name="Fartmann B."/>
            <person name="Granderath K."/>
            <person name="Dauner D."/>
            <person name="Herzl A."/>
            <person name="Neumann S."/>
            <person name="Argiriou A."/>
            <person name="Vitale D."/>
            <person name="Liguori R."/>
            <person name="Piravandi E."/>
            <person name="Massenet O."/>
            <person name="Quigley F."/>
            <person name="Clabauld G."/>
            <person name="Muendlein A."/>
            <person name="Felber R."/>
            <person name="Schnabl S."/>
            <person name="Hiller R."/>
            <person name="Schmidt W."/>
            <person name="Lecharny A."/>
            <person name="Aubourg S."/>
            <person name="Chefdor F."/>
            <person name="Cooke R."/>
            <person name="Berger C."/>
            <person name="Monfort A."/>
            <person name="Casacuberta E."/>
            <person name="Gibbons T."/>
            <person name="Weber N."/>
            <person name="Vandenbol M."/>
            <person name="Bargues M."/>
            <person name="Terol J."/>
            <person name="Torres A."/>
            <person name="Perez-Perez A."/>
            <person name="Purnelle B."/>
            <person name="Bent E."/>
            <person name="Johnson S."/>
            <person name="Tacon D."/>
            <person name="Jesse T."/>
            <person name="Heijnen L."/>
            <person name="Schwarz S."/>
            <person name="Scholler P."/>
            <person name="Heber S."/>
            <person name="Francs P."/>
            <person name="Bielke C."/>
            <person name="Frishman D."/>
            <person name="Haase D."/>
            <person name="Lemcke K."/>
            <person name="Mewes H.-W."/>
            <person name="Stocker S."/>
            <person name="Zaccaria P."/>
            <person name="Bevan M."/>
            <person name="Wilson R.K."/>
            <person name="de la Bastide M."/>
            <person name="Habermann K."/>
            <person name="Parnell L."/>
            <person name="Dedhia N."/>
            <person name="Gnoj L."/>
            <person name="Schutz K."/>
            <person name="Huang E."/>
            <person name="Spiegel L."/>
            <person name="Sekhon M."/>
            <person name="Murray J."/>
            <person name="Sheet P."/>
            <person name="Cordes M."/>
            <person name="Abu-Threideh J."/>
            <person name="Stoneking T."/>
            <person name="Kalicki J."/>
            <person name="Graves T."/>
            <person name="Harmon G."/>
            <person name="Edwards J."/>
            <person name="Latreille P."/>
            <person name="Courtney L."/>
            <person name="Cloud J."/>
            <person name="Abbott A."/>
            <person name="Scott K."/>
            <person name="Johnson D."/>
            <person name="Minx P."/>
            <person name="Bentley D."/>
            <person name="Fulton B."/>
            <person name="Miller N."/>
            <person name="Greco T."/>
            <person name="Kemp K."/>
            <person name="Kramer J."/>
            <person name="Fulton L."/>
            <person name="Mardis E."/>
            <person name="Dante M."/>
            <person name="Pepin K."/>
            <person name="Hillier L.W."/>
            <person name="Nelson J."/>
            <person name="Spieth J."/>
            <person name="Ryan E."/>
            <person name="Andrews S."/>
            <person name="Geisel C."/>
            <person name="Layman D."/>
            <person name="Du H."/>
            <person name="Ali J."/>
            <person name="Berghoff A."/>
            <person name="Jones K."/>
            <person name="Drone K."/>
            <person name="Cotton M."/>
            <person name="Joshu C."/>
            <person name="Antonoiu B."/>
            <person name="Zidanic M."/>
            <person name="Strong C."/>
            <person name="Sun H."/>
            <person name="Lamar B."/>
            <person name="Yordan C."/>
            <person name="Ma P."/>
            <person name="Zhong J."/>
            <person name="Preston R."/>
            <person name="Vil D."/>
            <person name="Shekher M."/>
            <person name="Matero A."/>
            <person name="Shah R."/>
            <person name="Swaby I.K."/>
            <person name="O'Shaughnessy A."/>
            <person name="Rodriguez M."/>
            <person name="Hoffman J."/>
            <person name="Till S."/>
            <person name="Granat S."/>
            <person name="Shohdy N."/>
            <person name="Hasegawa A."/>
            <person name="Hameed A."/>
            <person name="Lodhi M."/>
            <person name="Johnson A."/>
            <person name="Chen E."/>
            <person name="Marra M.A."/>
            <person name="Martienssen R."/>
            <person name="McCombie W.R."/>
        </authorList>
    </citation>
    <scope>NUCLEOTIDE SEQUENCE [LARGE SCALE GENOMIC DNA]</scope>
    <source>
        <strain>cv. Columbia</strain>
    </source>
</reference>
<reference key="2">
    <citation type="journal article" date="2017" name="Plant J.">
        <title>Araport11: a complete reannotation of the Arabidopsis thaliana reference genome.</title>
        <authorList>
            <person name="Cheng C.Y."/>
            <person name="Krishnakumar V."/>
            <person name="Chan A.P."/>
            <person name="Thibaud-Nissen F."/>
            <person name="Schobel S."/>
            <person name="Town C.D."/>
        </authorList>
    </citation>
    <scope>GENOME REANNOTATION</scope>
    <source>
        <strain>cv. Columbia</strain>
    </source>
</reference>
<reference key="3">
    <citation type="journal article" date="2003" name="Science">
        <title>Empirical analysis of transcriptional activity in the Arabidopsis genome.</title>
        <authorList>
            <person name="Yamada K."/>
            <person name="Lim J."/>
            <person name="Dale J.M."/>
            <person name="Chen H."/>
            <person name="Shinn P."/>
            <person name="Palm C.J."/>
            <person name="Southwick A.M."/>
            <person name="Wu H.C."/>
            <person name="Kim C.J."/>
            <person name="Nguyen M."/>
            <person name="Pham P.K."/>
            <person name="Cheuk R.F."/>
            <person name="Karlin-Newmann G."/>
            <person name="Liu S.X."/>
            <person name="Lam B."/>
            <person name="Sakano H."/>
            <person name="Wu T."/>
            <person name="Yu G."/>
            <person name="Miranda M."/>
            <person name="Quach H.L."/>
            <person name="Tripp M."/>
            <person name="Chang C.H."/>
            <person name="Lee J.M."/>
            <person name="Toriumi M.J."/>
            <person name="Chan M.M."/>
            <person name="Tang C.C."/>
            <person name="Onodera C.S."/>
            <person name="Deng J.M."/>
            <person name="Akiyama K."/>
            <person name="Ansari Y."/>
            <person name="Arakawa T."/>
            <person name="Banh J."/>
            <person name="Banno F."/>
            <person name="Bowser L."/>
            <person name="Brooks S.Y."/>
            <person name="Carninci P."/>
            <person name="Chao Q."/>
            <person name="Choy N."/>
            <person name="Enju A."/>
            <person name="Goldsmith A.D."/>
            <person name="Gurjal M."/>
            <person name="Hansen N.F."/>
            <person name="Hayashizaki Y."/>
            <person name="Johnson-Hopson C."/>
            <person name="Hsuan V.W."/>
            <person name="Iida K."/>
            <person name="Karnes M."/>
            <person name="Khan S."/>
            <person name="Koesema E."/>
            <person name="Ishida J."/>
            <person name="Jiang P.X."/>
            <person name="Jones T."/>
            <person name="Kawai J."/>
            <person name="Kamiya A."/>
            <person name="Meyers C."/>
            <person name="Nakajima M."/>
            <person name="Narusaka M."/>
            <person name="Seki M."/>
            <person name="Sakurai T."/>
            <person name="Satou M."/>
            <person name="Tamse R."/>
            <person name="Vaysberg M."/>
            <person name="Wallender E.K."/>
            <person name="Wong C."/>
            <person name="Yamamura Y."/>
            <person name="Yuan S."/>
            <person name="Shinozaki K."/>
            <person name="Davis R.W."/>
            <person name="Theologis A."/>
            <person name="Ecker J.R."/>
        </authorList>
    </citation>
    <scope>NUCLEOTIDE SEQUENCE [LARGE SCALE MRNA]</scope>
    <source>
        <strain>cv. Columbia</strain>
    </source>
</reference>
<reference key="4">
    <citation type="journal article" date="2010" name="BMC Plant Biol.">
        <title>YAO is a nucleolar WD40-repeat protein critical for embryogenesis and gametogenesis in Arabidopsis.</title>
        <authorList>
            <person name="Li H.J."/>
            <person name="Liu N.Y."/>
            <person name="Shi D.Q."/>
            <person name="Liu J."/>
            <person name="Yang W.C."/>
        </authorList>
    </citation>
    <scope>FUNCTION</scope>
    <scope>SUBCELLULAR LOCATION</scope>
    <scope>TISSUE SPECIFICITY</scope>
    <scope>DEVELOPMENTAL STAGE</scope>
    <scope>DISRUPTION PHENOTYPE</scope>
</reference>
<feature type="chain" id="PRO_0000433090" description="U3 snoRNP-associated protein-like YAO">
    <location>
        <begin position="1"/>
        <end position="504"/>
    </location>
</feature>
<feature type="repeat" description="WD 1" evidence="2">
    <location>
        <begin position="159"/>
        <end position="198"/>
    </location>
</feature>
<feature type="repeat" description="WD 2" evidence="2">
    <location>
        <begin position="220"/>
        <end position="259"/>
    </location>
</feature>
<feature type="repeat" description="WD 3" evidence="2">
    <location>
        <begin position="262"/>
        <end position="301"/>
    </location>
</feature>
<feature type="repeat" description="WD 4" evidence="2">
    <location>
        <begin position="304"/>
        <end position="342"/>
    </location>
</feature>
<feature type="repeat" description="WD 5" evidence="2">
    <location>
        <begin position="344"/>
        <end position="382"/>
    </location>
</feature>
<feature type="repeat" description="WD 6" evidence="2">
    <location>
        <begin position="413"/>
        <end position="452"/>
    </location>
</feature>
<feature type="repeat" description="WD 7" evidence="2">
    <location>
        <begin position="456"/>
        <end position="496"/>
    </location>
</feature>
<feature type="region of interest" description="Disordered" evidence="3">
    <location>
        <begin position="1"/>
        <end position="120"/>
    </location>
</feature>
<feature type="compositionally biased region" description="Basic and acidic residues" evidence="3">
    <location>
        <begin position="20"/>
        <end position="33"/>
    </location>
</feature>
<feature type="compositionally biased region" description="Acidic residues" evidence="3">
    <location>
        <begin position="41"/>
        <end position="54"/>
    </location>
</feature>
<feature type="compositionally biased region" description="Acidic residues" evidence="3">
    <location>
        <begin position="70"/>
        <end position="81"/>
    </location>
</feature>
<feature type="compositionally biased region" description="Basic and acidic residues" evidence="3">
    <location>
        <begin position="89"/>
        <end position="106"/>
    </location>
</feature>
<feature type="compositionally biased region" description="Acidic residues" evidence="3">
    <location>
        <begin position="107"/>
        <end position="120"/>
    </location>
</feature>
<organism>
    <name type="scientific">Arabidopsis thaliana</name>
    <name type="common">Mouse-ear cress</name>
    <dbReference type="NCBI Taxonomy" id="3702"/>
    <lineage>
        <taxon>Eukaryota</taxon>
        <taxon>Viridiplantae</taxon>
        <taxon>Streptophyta</taxon>
        <taxon>Embryophyta</taxon>
        <taxon>Tracheophyta</taxon>
        <taxon>Spermatophyta</taxon>
        <taxon>Magnoliopsida</taxon>
        <taxon>eudicotyledons</taxon>
        <taxon>Gunneridae</taxon>
        <taxon>Pentapetalae</taxon>
        <taxon>rosids</taxon>
        <taxon>malvids</taxon>
        <taxon>Brassicales</taxon>
        <taxon>Brassicaceae</taxon>
        <taxon>Camelineae</taxon>
        <taxon>Arabidopsis</taxon>
    </lineage>
</organism>